<accession>Q82SI9</accession>
<dbReference type="EC" id="3.1.-.-" evidence="1"/>
<dbReference type="EMBL" id="AL954747">
    <property type="protein sequence ID" value="CAD86245.1"/>
    <property type="molecule type" value="Genomic_DNA"/>
</dbReference>
<dbReference type="SMR" id="Q82SI9"/>
<dbReference type="STRING" id="228410.NE2333"/>
<dbReference type="KEGG" id="neu:NE2333"/>
<dbReference type="eggNOG" id="COG0319">
    <property type="taxonomic scope" value="Bacteria"/>
</dbReference>
<dbReference type="HOGENOM" id="CLU_106710_0_1_4"/>
<dbReference type="OrthoDB" id="9807740at2"/>
<dbReference type="PhylomeDB" id="Q82SI9"/>
<dbReference type="Proteomes" id="UP000001416">
    <property type="component" value="Chromosome"/>
</dbReference>
<dbReference type="GO" id="GO:0005737">
    <property type="term" value="C:cytoplasm"/>
    <property type="evidence" value="ECO:0007669"/>
    <property type="project" value="UniProtKB-SubCell"/>
</dbReference>
<dbReference type="GO" id="GO:0004222">
    <property type="term" value="F:metalloendopeptidase activity"/>
    <property type="evidence" value="ECO:0007669"/>
    <property type="project" value="InterPro"/>
</dbReference>
<dbReference type="GO" id="GO:0004521">
    <property type="term" value="F:RNA endonuclease activity"/>
    <property type="evidence" value="ECO:0007669"/>
    <property type="project" value="UniProtKB-UniRule"/>
</dbReference>
<dbReference type="GO" id="GO:0008270">
    <property type="term" value="F:zinc ion binding"/>
    <property type="evidence" value="ECO:0007669"/>
    <property type="project" value="UniProtKB-UniRule"/>
</dbReference>
<dbReference type="GO" id="GO:0006364">
    <property type="term" value="P:rRNA processing"/>
    <property type="evidence" value="ECO:0007669"/>
    <property type="project" value="UniProtKB-UniRule"/>
</dbReference>
<dbReference type="Gene3D" id="3.40.390.30">
    <property type="entry name" value="Metalloproteases ('zincins'), catalytic domain"/>
    <property type="match status" value="1"/>
</dbReference>
<dbReference type="HAMAP" id="MF_00009">
    <property type="entry name" value="Endoribonucl_YbeY"/>
    <property type="match status" value="1"/>
</dbReference>
<dbReference type="InterPro" id="IPR023091">
    <property type="entry name" value="MetalPrtase_cat_dom_sf_prd"/>
</dbReference>
<dbReference type="InterPro" id="IPR002036">
    <property type="entry name" value="YbeY"/>
</dbReference>
<dbReference type="InterPro" id="IPR020549">
    <property type="entry name" value="YbeY_CS"/>
</dbReference>
<dbReference type="NCBIfam" id="TIGR00043">
    <property type="entry name" value="rRNA maturation RNase YbeY"/>
    <property type="match status" value="1"/>
</dbReference>
<dbReference type="PANTHER" id="PTHR46986">
    <property type="entry name" value="ENDORIBONUCLEASE YBEY, CHLOROPLASTIC"/>
    <property type="match status" value="1"/>
</dbReference>
<dbReference type="PANTHER" id="PTHR46986:SF1">
    <property type="entry name" value="ENDORIBONUCLEASE YBEY, CHLOROPLASTIC"/>
    <property type="match status" value="1"/>
</dbReference>
<dbReference type="Pfam" id="PF02130">
    <property type="entry name" value="YbeY"/>
    <property type="match status" value="1"/>
</dbReference>
<dbReference type="SUPFAM" id="SSF55486">
    <property type="entry name" value="Metalloproteases ('zincins'), catalytic domain"/>
    <property type="match status" value="1"/>
</dbReference>
<dbReference type="PROSITE" id="PS01306">
    <property type="entry name" value="UPF0054"/>
    <property type="match status" value="1"/>
</dbReference>
<organism>
    <name type="scientific">Nitrosomonas europaea (strain ATCC 19718 / CIP 103999 / KCTC 2705 / NBRC 14298)</name>
    <dbReference type="NCBI Taxonomy" id="228410"/>
    <lineage>
        <taxon>Bacteria</taxon>
        <taxon>Pseudomonadati</taxon>
        <taxon>Pseudomonadota</taxon>
        <taxon>Betaproteobacteria</taxon>
        <taxon>Nitrosomonadales</taxon>
        <taxon>Nitrosomonadaceae</taxon>
        <taxon>Nitrosomonas</taxon>
    </lineage>
</organism>
<name>YBEY_NITEU</name>
<proteinExistence type="inferred from homology"/>
<protein>
    <recommendedName>
        <fullName evidence="1">Endoribonuclease YbeY</fullName>
        <ecNumber evidence="1">3.1.-.-</ecNumber>
    </recommendedName>
</protein>
<reference key="1">
    <citation type="journal article" date="2003" name="J. Bacteriol.">
        <title>Complete genome sequence of the ammonia-oxidizing bacterium and obligate chemolithoautotroph Nitrosomonas europaea.</title>
        <authorList>
            <person name="Chain P."/>
            <person name="Lamerdin J.E."/>
            <person name="Larimer F.W."/>
            <person name="Regala W."/>
            <person name="Lao V."/>
            <person name="Land M.L."/>
            <person name="Hauser L."/>
            <person name="Hooper A.B."/>
            <person name="Klotz M.G."/>
            <person name="Norton J."/>
            <person name="Sayavedra-Soto L.A."/>
            <person name="Arciero D.M."/>
            <person name="Hommes N.G."/>
            <person name="Whittaker M.M."/>
            <person name="Arp D.J."/>
        </authorList>
    </citation>
    <scope>NUCLEOTIDE SEQUENCE [LARGE SCALE GENOMIC DNA]</scope>
    <source>
        <strain>ATCC 19718 / CIP 103999 / KCTC 2705 / NBRC 14298</strain>
    </source>
</reference>
<comment type="function">
    <text evidence="1">Single strand-specific metallo-endoribonuclease involved in late-stage 70S ribosome quality control and in maturation of the 3' terminus of the 16S rRNA.</text>
</comment>
<comment type="cofactor">
    <cofactor evidence="1">
        <name>Zn(2+)</name>
        <dbReference type="ChEBI" id="CHEBI:29105"/>
    </cofactor>
    <text evidence="1">Binds 1 zinc ion.</text>
</comment>
<comment type="subcellular location">
    <subcellularLocation>
        <location evidence="1">Cytoplasm</location>
    </subcellularLocation>
</comment>
<comment type="similarity">
    <text evidence="1">Belongs to the endoribonuclease YbeY family.</text>
</comment>
<feature type="chain" id="PRO_0000102497" description="Endoribonuclease YbeY">
    <location>
        <begin position="1"/>
        <end position="164"/>
    </location>
</feature>
<feature type="binding site" evidence="1">
    <location>
        <position position="124"/>
    </location>
    <ligand>
        <name>Zn(2+)</name>
        <dbReference type="ChEBI" id="CHEBI:29105"/>
        <note>catalytic</note>
    </ligand>
</feature>
<feature type="binding site" evidence="1">
    <location>
        <position position="128"/>
    </location>
    <ligand>
        <name>Zn(2+)</name>
        <dbReference type="ChEBI" id="CHEBI:29105"/>
        <note>catalytic</note>
    </ligand>
</feature>
<feature type="binding site" evidence="1">
    <location>
        <position position="134"/>
    </location>
    <ligand>
        <name>Zn(2+)</name>
        <dbReference type="ChEBI" id="CHEBI:29105"/>
        <note>catalytic</note>
    </ligand>
</feature>
<gene>
    <name evidence="1" type="primary">ybeY</name>
    <name type="ordered locus">NE2333</name>
</gene>
<keyword id="KW-0963">Cytoplasm</keyword>
<keyword id="KW-0255">Endonuclease</keyword>
<keyword id="KW-0378">Hydrolase</keyword>
<keyword id="KW-0479">Metal-binding</keyword>
<keyword id="KW-0540">Nuclease</keyword>
<keyword id="KW-1185">Reference proteome</keyword>
<keyword id="KW-0690">Ribosome biogenesis</keyword>
<keyword id="KW-0698">rRNA processing</keyword>
<keyword id="KW-0862">Zinc</keyword>
<evidence type="ECO:0000255" key="1">
    <source>
        <dbReference type="HAMAP-Rule" id="MF_00009"/>
    </source>
</evidence>
<sequence length="164" mass="18667">MPTRNMPLTKNPVESPDHEQELVLTVQYVADKTDIPNRRLFRKWVKAALSKPAEVVIRIVDRQEGEILNRDFRGKSSATNVLTFVYDDDVPLLGDIVLCAPVICNEAQQQGKDLTAHYAHLTIHGILHLQGYDHIRDEDAVVMESLETEIITRLGYPDPYVIQH</sequence>